<feature type="signal peptide" evidence="1">
    <location>
        <begin position="1"/>
        <end position="25"/>
    </location>
</feature>
<feature type="chain" id="PRO_0000234942" description="Ribonuclease pancreatic beta-type">
    <location>
        <begin position="26"/>
        <end position="152"/>
    </location>
</feature>
<feature type="region of interest" description="Disordered" evidence="2">
    <location>
        <begin position="25"/>
        <end position="53"/>
    </location>
</feature>
<feature type="compositionally biased region" description="Basic and acidic residues" evidence="2">
    <location>
        <begin position="27"/>
        <end position="45"/>
    </location>
</feature>
<feature type="active site" description="Proton acceptor" evidence="1">
    <location>
        <position position="40"/>
    </location>
</feature>
<feature type="active site" description="Proton donor" evidence="1">
    <location>
        <position position="147"/>
    </location>
</feature>
<feature type="binding site" evidence="1">
    <location>
        <position position="35"/>
    </location>
    <ligand>
        <name>substrate</name>
    </ligand>
</feature>
<feature type="binding site" evidence="1">
    <location>
        <position position="38"/>
    </location>
    <ligand>
        <name>substrate</name>
    </ligand>
</feature>
<feature type="binding site" evidence="1">
    <location>
        <begin position="69"/>
        <end position="73"/>
    </location>
    <ligand>
        <name>substrate</name>
    </ligand>
</feature>
<feature type="binding site" evidence="1">
    <location>
        <position position="94"/>
    </location>
    <ligand>
        <name>substrate</name>
    </ligand>
</feature>
<feature type="disulfide bond" evidence="1">
    <location>
        <begin position="54"/>
        <end position="112"/>
    </location>
</feature>
<feature type="disulfide bond" evidence="1">
    <location>
        <begin position="68"/>
        <end position="123"/>
    </location>
</feature>
<feature type="disulfide bond" evidence="1">
    <location>
        <begin position="86"/>
        <end position="138"/>
    </location>
</feature>
<feature type="disulfide bond" evidence="1">
    <location>
        <begin position="93"/>
        <end position="100"/>
    </location>
</feature>
<protein>
    <recommendedName>
        <fullName>Ribonuclease pancreatic beta-type</fullName>
        <ecNumber>4.6.1.18</ecNumber>
    </recommendedName>
    <alternativeName>
        <fullName>RNase 1 gamma</fullName>
    </alternativeName>
</protein>
<organism>
    <name type="scientific">Rattus tiomanicus</name>
    <name type="common">Malayan field rat</name>
    <name type="synonym">Rattus jalorensis</name>
    <dbReference type="NCBI Taxonomy" id="83755"/>
    <lineage>
        <taxon>Eukaryota</taxon>
        <taxon>Metazoa</taxon>
        <taxon>Chordata</taxon>
        <taxon>Craniata</taxon>
        <taxon>Vertebrata</taxon>
        <taxon>Euteleostomi</taxon>
        <taxon>Mammalia</taxon>
        <taxon>Eutheria</taxon>
        <taxon>Euarchontoglires</taxon>
        <taxon>Glires</taxon>
        <taxon>Rodentia</taxon>
        <taxon>Myomorpha</taxon>
        <taxon>Muroidea</taxon>
        <taxon>Muridae</taxon>
        <taxon>Murinae</taxon>
        <taxon>Rattus</taxon>
    </lineage>
</organism>
<dbReference type="EC" id="4.6.1.18"/>
<dbReference type="EMBL" id="AJ315465">
    <property type="protein sequence ID" value="CAC86446.1"/>
    <property type="molecule type" value="Genomic_DNA"/>
</dbReference>
<dbReference type="GO" id="GO:0005576">
    <property type="term" value="C:extracellular region"/>
    <property type="evidence" value="ECO:0007669"/>
    <property type="project" value="UniProtKB-SubCell"/>
</dbReference>
<dbReference type="GO" id="GO:0016829">
    <property type="term" value="F:lyase activity"/>
    <property type="evidence" value="ECO:0007669"/>
    <property type="project" value="UniProtKB-KW"/>
</dbReference>
<dbReference type="GO" id="GO:0003676">
    <property type="term" value="F:nucleic acid binding"/>
    <property type="evidence" value="ECO:0007669"/>
    <property type="project" value="InterPro"/>
</dbReference>
<dbReference type="GO" id="GO:0004522">
    <property type="term" value="F:ribonuclease A activity"/>
    <property type="evidence" value="ECO:0007669"/>
    <property type="project" value="UniProtKB-EC"/>
</dbReference>
<dbReference type="GO" id="GO:0050830">
    <property type="term" value="P:defense response to Gram-positive bacterium"/>
    <property type="evidence" value="ECO:0007669"/>
    <property type="project" value="TreeGrafter"/>
</dbReference>
<dbReference type="CDD" id="cd06265">
    <property type="entry name" value="RNase_A_canonical"/>
    <property type="match status" value="1"/>
</dbReference>
<dbReference type="FunFam" id="3.10.130.10:FF:000001">
    <property type="entry name" value="Ribonuclease pancreatic"/>
    <property type="match status" value="1"/>
</dbReference>
<dbReference type="Gene3D" id="3.10.130.10">
    <property type="entry name" value="Ribonuclease A-like domain"/>
    <property type="match status" value="1"/>
</dbReference>
<dbReference type="InterPro" id="IPR001427">
    <property type="entry name" value="RNaseA"/>
</dbReference>
<dbReference type="InterPro" id="IPR036816">
    <property type="entry name" value="RNaseA-like_dom_sf"/>
</dbReference>
<dbReference type="InterPro" id="IPR023411">
    <property type="entry name" value="RNaseA_AS"/>
</dbReference>
<dbReference type="InterPro" id="IPR023412">
    <property type="entry name" value="RNaseA_domain"/>
</dbReference>
<dbReference type="PANTHER" id="PTHR11437">
    <property type="entry name" value="RIBONUCLEASE"/>
    <property type="match status" value="1"/>
</dbReference>
<dbReference type="PANTHER" id="PTHR11437:SF24">
    <property type="entry name" value="RIBONUCLEASE PANCREATIC"/>
    <property type="match status" value="1"/>
</dbReference>
<dbReference type="Pfam" id="PF00074">
    <property type="entry name" value="RnaseA"/>
    <property type="match status" value="1"/>
</dbReference>
<dbReference type="PRINTS" id="PR00794">
    <property type="entry name" value="RIBONUCLEASE"/>
</dbReference>
<dbReference type="SMART" id="SM00092">
    <property type="entry name" value="RNAse_Pc"/>
    <property type="match status" value="1"/>
</dbReference>
<dbReference type="SUPFAM" id="SSF54076">
    <property type="entry name" value="RNase A-like"/>
    <property type="match status" value="1"/>
</dbReference>
<dbReference type="PROSITE" id="PS00127">
    <property type="entry name" value="RNASE_PANCREATIC"/>
    <property type="match status" value="1"/>
</dbReference>
<comment type="function">
    <text evidence="1">Endonuclease that catalyzes the cleavage of RNA on the 3' side of pyrimidine nucleotides. Acts on single-stranded and double-stranded RNA (By similarity).</text>
</comment>
<comment type="catalytic activity">
    <reaction>
        <text>an [RNA] containing cytidine + H2O = an [RNA]-3'-cytidine-3'-phosphate + a 5'-hydroxy-ribonucleotide-3'-[RNA].</text>
        <dbReference type="EC" id="4.6.1.18"/>
    </reaction>
</comment>
<comment type="catalytic activity">
    <reaction>
        <text>an [RNA] containing uridine + H2O = an [RNA]-3'-uridine-3'-phosphate + a 5'-hydroxy-ribonucleotide-3'-[RNA].</text>
        <dbReference type="EC" id="4.6.1.18"/>
    </reaction>
</comment>
<comment type="subunit">
    <text evidence="1">Monomer.</text>
</comment>
<comment type="subcellular location">
    <subcellularLocation>
        <location evidence="1">Secreted</location>
    </subcellularLocation>
</comment>
<comment type="similarity">
    <text evidence="3">Belongs to the pancreatic ribonuclease family.</text>
</comment>
<reference key="1">
    <citation type="journal article" date="2002" name="J. Mol. Evol.">
        <title>Pancreatic-type ribonuclease 1 gene duplications in rat species.</title>
        <authorList>
            <person name="Dubois J.-Y.F."/>
            <person name="Jekel P.A."/>
            <person name="Mulder P.P.M.F.A."/>
            <person name="Bussink A.P."/>
            <person name="Catzeflis F.M."/>
            <person name="Carsana A."/>
            <person name="Beintema J.J."/>
        </authorList>
    </citation>
    <scope>NUCLEOTIDE SEQUENCE [GENOMIC DNA]</scope>
</reference>
<accession>Q8VD84</accession>
<name>RNS1B_RATTI</name>
<evidence type="ECO:0000250" key="1"/>
<evidence type="ECO:0000256" key="2">
    <source>
        <dbReference type="SAM" id="MobiDB-lite"/>
    </source>
</evidence>
<evidence type="ECO:0000305" key="3"/>
<proteinExistence type="inferred from homology"/>
<sequence length="152" mass="16874">MGLXKSFALFSLLVLVLGWVQPSLSGESRESSADKFKRQHMDPDSPSKSSPTYCNQMMKRQGMTKGSCKRVNTFVHEPLEDVQAICSQGQVTCKNGRNNCYKSSSTLHITECHLKGSSKYPNCDYTTTDSQKHIIIACEGNPLVPVHFDDSV</sequence>
<keyword id="KW-1015">Disulfide bond</keyword>
<keyword id="KW-0255">Endonuclease</keyword>
<keyword id="KW-0378">Hydrolase</keyword>
<keyword id="KW-0456">Lyase</keyword>
<keyword id="KW-0540">Nuclease</keyword>
<keyword id="KW-0964">Secreted</keyword>
<keyword id="KW-0732">Signal</keyword>